<organism>
    <name type="scientific">Pseudomonas putida (strain W619)</name>
    <dbReference type="NCBI Taxonomy" id="390235"/>
    <lineage>
        <taxon>Bacteria</taxon>
        <taxon>Pseudomonadati</taxon>
        <taxon>Pseudomonadota</taxon>
        <taxon>Gammaproteobacteria</taxon>
        <taxon>Pseudomonadales</taxon>
        <taxon>Pseudomonadaceae</taxon>
        <taxon>Pseudomonas</taxon>
    </lineage>
</organism>
<gene>
    <name evidence="1" type="primary">ubiD</name>
    <name type="ordered locus">PputW619_5036</name>
</gene>
<accession>B1JFC8</accession>
<sequence>MQYRDLRDFIRGLEQRGELKRIQVPISPVLEMTEVCDRTLRAKGPALLFEKPTGFDIPVLGNLFGTPERVAMGMGAESVEELREIGKLLAFLKEPEPPKGLKDAWSKLPIFKKVVSMAPKVVKDAVCQEVVVEGDDVDLGQLPIQHCWPGDVAPLITWGLTVTRGPNKDRQNLGIYRQQVIGRNKVIMRWLSHRGGALDYREWCEKNPGQPFPVAVALGADPATILGAVTPVPDTLSEYAFAGLLRGNRTELVKCRGSNLQVPATAEIILEGVIHPGEMAPEGPYGDHTGYYNEVDSFPVFTVERITHRQKPIYHSTYTGRPPDEPAILGVALNEVFVPILQKQFPEIVDFYLPPEGCSYRMAVVTMKKQYPGHAKRVMLGVWSFLRQFMYTKFVIVTDDDINARDWNDVIWAITTRMDPKRDTVMIDNTPIDYLDFASPVSGLGSKMGLDATHKWPGETTREWGRVIVKDEAVTRRIDELWDQLGID</sequence>
<reference key="1">
    <citation type="submission" date="2008-02" db="EMBL/GenBank/DDBJ databases">
        <title>Complete sequence of Pseudomonas putida W619.</title>
        <authorList>
            <person name="Copeland A."/>
            <person name="Lucas S."/>
            <person name="Lapidus A."/>
            <person name="Barry K."/>
            <person name="Detter J.C."/>
            <person name="Glavina del Rio T."/>
            <person name="Dalin E."/>
            <person name="Tice H."/>
            <person name="Pitluck S."/>
            <person name="Chain P."/>
            <person name="Malfatti S."/>
            <person name="Shin M."/>
            <person name="Vergez L."/>
            <person name="Schmutz J."/>
            <person name="Larimer F."/>
            <person name="Land M."/>
            <person name="Hauser L."/>
            <person name="Kyrpides N."/>
            <person name="Kim E."/>
            <person name="Taghavi S."/>
            <person name="Vangronsveld D."/>
            <person name="van der Lelie D."/>
            <person name="Richardson P."/>
        </authorList>
    </citation>
    <scope>NUCLEOTIDE SEQUENCE [LARGE SCALE GENOMIC DNA]</scope>
    <source>
        <strain>W619</strain>
    </source>
</reference>
<proteinExistence type="inferred from homology"/>
<keyword id="KW-1003">Cell membrane</keyword>
<keyword id="KW-0210">Decarboxylase</keyword>
<keyword id="KW-0285">Flavoprotein</keyword>
<keyword id="KW-0288">FMN</keyword>
<keyword id="KW-0456">Lyase</keyword>
<keyword id="KW-0464">Manganese</keyword>
<keyword id="KW-0472">Membrane</keyword>
<keyword id="KW-0479">Metal-binding</keyword>
<keyword id="KW-0831">Ubiquinone biosynthesis</keyword>
<feature type="chain" id="PRO_1000186720" description="3-octaprenyl-4-hydroxybenzoate carboxy-lyase">
    <location>
        <begin position="1"/>
        <end position="488"/>
    </location>
</feature>
<feature type="active site" description="Proton donor" evidence="1">
    <location>
        <position position="287"/>
    </location>
</feature>
<feature type="binding site" evidence="1">
    <location>
        <position position="172"/>
    </location>
    <ligand>
        <name>Mn(2+)</name>
        <dbReference type="ChEBI" id="CHEBI:29035"/>
    </ligand>
</feature>
<feature type="binding site" evidence="1">
    <location>
        <begin position="175"/>
        <end position="177"/>
    </location>
    <ligand>
        <name>prenylated FMN</name>
        <dbReference type="ChEBI" id="CHEBI:87746"/>
    </ligand>
</feature>
<feature type="binding site" evidence="1">
    <location>
        <begin position="189"/>
        <end position="191"/>
    </location>
    <ligand>
        <name>prenylated FMN</name>
        <dbReference type="ChEBI" id="CHEBI:87746"/>
    </ligand>
</feature>
<feature type="binding site" evidence="1">
    <location>
        <begin position="194"/>
        <end position="195"/>
    </location>
    <ligand>
        <name>prenylated FMN</name>
        <dbReference type="ChEBI" id="CHEBI:87746"/>
    </ligand>
</feature>
<feature type="binding site" evidence="1">
    <location>
        <position position="238"/>
    </location>
    <ligand>
        <name>Mn(2+)</name>
        <dbReference type="ChEBI" id="CHEBI:29035"/>
    </ligand>
</feature>
<dbReference type="EC" id="4.1.1.98" evidence="1"/>
<dbReference type="EMBL" id="CP000949">
    <property type="protein sequence ID" value="ACA75512.1"/>
    <property type="molecule type" value="Genomic_DNA"/>
</dbReference>
<dbReference type="SMR" id="B1JFC8"/>
<dbReference type="STRING" id="390235.PputW619_5036"/>
<dbReference type="KEGG" id="ppw:PputW619_5036"/>
<dbReference type="eggNOG" id="COG0043">
    <property type="taxonomic scope" value="Bacteria"/>
</dbReference>
<dbReference type="HOGENOM" id="CLU_023348_4_1_6"/>
<dbReference type="OrthoDB" id="9809841at2"/>
<dbReference type="UniPathway" id="UPA00232"/>
<dbReference type="GO" id="GO:0005829">
    <property type="term" value="C:cytosol"/>
    <property type="evidence" value="ECO:0007669"/>
    <property type="project" value="TreeGrafter"/>
</dbReference>
<dbReference type="GO" id="GO:0005886">
    <property type="term" value="C:plasma membrane"/>
    <property type="evidence" value="ECO:0007669"/>
    <property type="project" value="UniProtKB-SubCell"/>
</dbReference>
<dbReference type="GO" id="GO:0008694">
    <property type="term" value="F:3-octaprenyl-4-hydroxybenzoate carboxy-lyase activity"/>
    <property type="evidence" value="ECO:0007669"/>
    <property type="project" value="UniProtKB-UniRule"/>
</dbReference>
<dbReference type="GO" id="GO:0046872">
    <property type="term" value="F:metal ion binding"/>
    <property type="evidence" value="ECO:0007669"/>
    <property type="project" value="UniProtKB-KW"/>
</dbReference>
<dbReference type="GO" id="GO:0006744">
    <property type="term" value="P:ubiquinone biosynthetic process"/>
    <property type="evidence" value="ECO:0007669"/>
    <property type="project" value="UniProtKB-UniRule"/>
</dbReference>
<dbReference type="FunFam" id="1.20.5.570:FF:000001">
    <property type="entry name" value="3-octaprenyl-4-hydroxybenzoate carboxy-lyase"/>
    <property type="match status" value="1"/>
</dbReference>
<dbReference type="FunFam" id="3.40.1670.10:FF:000001">
    <property type="entry name" value="3-octaprenyl-4-hydroxybenzoate carboxy-lyase"/>
    <property type="match status" value="1"/>
</dbReference>
<dbReference type="Gene3D" id="1.20.5.570">
    <property type="entry name" value="Single helix bin"/>
    <property type="match status" value="1"/>
</dbReference>
<dbReference type="Gene3D" id="3.40.1670.10">
    <property type="entry name" value="UbiD C-terminal domain-like"/>
    <property type="match status" value="1"/>
</dbReference>
<dbReference type="HAMAP" id="MF_01636">
    <property type="entry name" value="UbiD"/>
    <property type="match status" value="1"/>
</dbReference>
<dbReference type="InterPro" id="IPR002830">
    <property type="entry name" value="UbiD"/>
</dbReference>
<dbReference type="InterPro" id="IPR049381">
    <property type="entry name" value="UbiD-like_C"/>
</dbReference>
<dbReference type="InterPro" id="IPR049383">
    <property type="entry name" value="UbiD-like_N"/>
</dbReference>
<dbReference type="InterPro" id="IPR023677">
    <property type="entry name" value="UbiD_bacteria"/>
</dbReference>
<dbReference type="InterPro" id="IPR048304">
    <property type="entry name" value="UbiD_Rift_dom"/>
</dbReference>
<dbReference type="NCBIfam" id="NF008175">
    <property type="entry name" value="PRK10922.1"/>
    <property type="match status" value="1"/>
</dbReference>
<dbReference type="NCBIfam" id="TIGR00148">
    <property type="entry name" value="UbiD family decarboxylase"/>
    <property type="match status" value="1"/>
</dbReference>
<dbReference type="PANTHER" id="PTHR30108">
    <property type="entry name" value="3-OCTAPRENYL-4-HYDROXYBENZOATE CARBOXY-LYASE-RELATED"/>
    <property type="match status" value="1"/>
</dbReference>
<dbReference type="PANTHER" id="PTHR30108:SF17">
    <property type="entry name" value="FERULIC ACID DECARBOXYLASE 1"/>
    <property type="match status" value="1"/>
</dbReference>
<dbReference type="Pfam" id="PF01977">
    <property type="entry name" value="UbiD"/>
    <property type="match status" value="1"/>
</dbReference>
<dbReference type="Pfam" id="PF20696">
    <property type="entry name" value="UbiD_C"/>
    <property type="match status" value="1"/>
</dbReference>
<dbReference type="Pfam" id="PF20695">
    <property type="entry name" value="UbiD_N"/>
    <property type="match status" value="1"/>
</dbReference>
<dbReference type="SUPFAM" id="SSF50475">
    <property type="entry name" value="FMN-binding split barrel"/>
    <property type="match status" value="1"/>
</dbReference>
<dbReference type="SUPFAM" id="SSF143968">
    <property type="entry name" value="UbiD C-terminal domain-like"/>
    <property type="match status" value="1"/>
</dbReference>
<name>UBID_PSEPW</name>
<evidence type="ECO:0000255" key="1">
    <source>
        <dbReference type="HAMAP-Rule" id="MF_01636"/>
    </source>
</evidence>
<comment type="function">
    <text evidence="1">Catalyzes the decarboxylation of 3-octaprenyl-4-hydroxy benzoate to 2-octaprenylphenol, an intermediate step in ubiquinone biosynthesis.</text>
</comment>
<comment type="catalytic activity">
    <reaction evidence="1">
        <text>a 4-hydroxy-3-(all-trans-polyprenyl)benzoate + H(+) = a 2-(all-trans-polyprenyl)phenol + CO2</text>
        <dbReference type="Rhea" id="RHEA:41680"/>
        <dbReference type="Rhea" id="RHEA-COMP:9514"/>
        <dbReference type="Rhea" id="RHEA-COMP:9516"/>
        <dbReference type="ChEBI" id="CHEBI:1269"/>
        <dbReference type="ChEBI" id="CHEBI:15378"/>
        <dbReference type="ChEBI" id="CHEBI:16526"/>
        <dbReference type="ChEBI" id="CHEBI:78396"/>
        <dbReference type="EC" id="4.1.1.98"/>
    </reaction>
</comment>
<comment type="cofactor">
    <cofactor evidence="1">
        <name>prenylated FMN</name>
        <dbReference type="ChEBI" id="CHEBI:87746"/>
    </cofactor>
    <text evidence="1">Binds 1 prenylated FMN per subunit.</text>
</comment>
<comment type="cofactor">
    <cofactor evidence="1">
        <name>Mn(2+)</name>
        <dbReference type="ChEBI" id="CHEBI:29035"/>
    </cofactor>
</comment>
<comment type="pathway">
    <text evidence="1">Cofactor biosynthesis; ubiquinone biosynthesis.</text>
</comment>
<comment type="subunit">
    <text evidence="1">Homohexamer.</text>
</comment>
<comment type="subcellular location">
    <subcellularLocation>
        <location evidence="1">Cell membrane</location>
        <topology evidence="1">Peripheral membrane protein</topology>
    </subcellularLocation>
</comment>
<comment type="similarity">
    <text evidence="1">Belongs to the UbiD family.</text>
</comment>
<protein>
    <recommendedName>
        <fullName evidence="1">3-octaprenyl-4-hydroxybenzoate carboxy-lyase</fullName>
        <ecNumber evidence="1">4.1.1.98</ecNumber>
    </recommendedName>
    <alternativeName>
        <fullName evidence="1">Polyprenyl p-hydroxybenzoate decarboxylase</fullName>
    </alternativeName>
</protein>